<feature type="chain" id="PRO_0000345599" description="Small ribosomal subunit protein bS18c">
    <location>
        <begin position="1"/>
        <end position="101"/>
    </location>
</feature>
<keyword id="KW-0150">Chloroplast</keyword>
<keyword id="KW-0934">Plastid</keyword>
<keyword id="KW-0687">Ribonucleoprotein</keyword>
<keyword id="KW-0689">Ribosomal protein</keyword>
<keyword id="KW-0694">RNA-binding</keyword>
<keyword id="KW-0699">rRNA-binding</keyword>
<sequence length="101" mass="12005">MDKSKRLFLKSKRSFRRRLPPIQSGDRIDYRNISLISRFISQQGKILSRRVNRLTLKQQRLITIAIKQARILSLLPFRPKAQRFKRSQSTARTVGLRTRNK</sequence>
<protein>
    <recommendedName>
        <fullName evidence="1">Small ribosomal subunit protein bS18c</fullName>
    </recommendedName>
    <alternativeName>
        <fullName evidence="2">30S ribosomal protein S18, chloroplastic</fullName>
    </alternativeName>
</protein>
<dbReference type="EMBL" id="EU262889">
    <property type="protein sequence ID" value="ABW98894.1"/>
    <property type="molecule type" value="Genomic_DNA"/>
</dbReference>
<dbReference type="RefSeq" id="YP_001687389.1">
    <property type="nucleotide sequence ID" value="NC_010361.1"/>
</dbReference>
<dbReference type="SMR" id="B0Z4Y2"/>
<dbReference type="GeneID" id="5952020"/>
<dbReference type="GO" id="GO:0009507">
    <property type="term" value="C:chloroplast"/>
    <property type="evidence" value="ECO:0007669"/>
    <property type="project" value="UniProtKB-SubCell"/>
</dbReference>
<dbReference type="GO" id="GO:0005763">
    <property type="term" value="C:mitochondrial small ribosomal subunit"/>
    <property type="evidence" value="ECO:0007669"/>
    <property type="project" value="TreeGrafter"/>
</dbReference>
<dbReference type="GO" id="GO:0070181">
    <property type="term" value="F:small ribosomal subunit rRNA binding"/>
    <property type="evidence" value="ECO:0007669"/>
    <property type="project" value="TreeGrafter"/>
</dbReference>
<dbReference type="GO" id="GO:0003735">
    <property type="term" value="F:structural constituent of ribosome"/>
    <property type="evidence" value="ECO:0007669"/>
    <property type="project" value="InterPro"/>
</dbReference>
<dbReference type="GO" id="GO:0006412">
    <property type="term" value="P:translation"/>
    <property type="evidence" value="ECO:0007669"/>
    <property type="project" value="UniProtKB-UniRule"/>
</dbReference>
<dbReference type="FunFam" id="4.10.640.10:FF:000002">
    <property type="entry name" value="30S ribosomal protein S18, chloroplastic"/>
    <property type="match status" value="1"/>
</dbReference>
<dbReference type="Gene3D" id="4.10.640.10">
    <property type="entry name" value="Ribosomal protein S18"/>
    <property type="match status" value="1"/>
</dbReference>
<dbReference type="HAMAP" id="MF_00270">
    <property type="entry name" value="Ribosomal_bS18"/>
    <property type="match status" value="1"/>
</dbReference>
<dbReference type="InterPro" id="IPR001648">
    <property type="entry name" value="Ribosomal_bS18"/>
</dbReference>
<dbReference type="InterPro" id="IPR036870">
    <property type="entry name" value="Ribosomal_bS18_sf"/>
</dbReference>
<dbReference type="NCBIfam" id="TIGR00165">
    <property type="entry name" value="S18"/>
    <property type="match status" value="1"/>
</dbReference>
<dbReference type="PANTHER" id="PTHR13479">
    <property type="entry name" value="30S RIBOSOMAL PROTEIN S18"/>
    <property type="match status" value="1"/>
</dbReference>
<dbReference type="PANTHER" id="PTHR13479:SF40">
    <property type="entry name" value="SMALL RIBOSOMAL SUBUNIT PROTEIN BS18M"/>
    <property type="match status" value="1"/>
</dbReference>
<dbReference type="Pfam" id="PF01084">
    <property type="entry name" value="Ribosomal_S18"/>
    <property type="match status" value="1"/>
</dbReference>
<dbReference type="PRINTS" id="PR00974">
    <property type="entry name" value="RIBOSOMALS18"/>
</dbReference>
<dbReference type="SUPFAM" id="SSF46911">
    <property type="entry name" value="Ribosomal protein S18"/>
    <property type="match status" value="1"/>
</dbReference>
<name>RR18_OENBI</name>
<organism>
    <name type="scientific">Oenothera biennis</name>
    <name type="common">German evening primrose</name>
    <name type="synonym">Onagra biennis</name>
    <dbReference type="NCBI Taxonomy" id="3942"/>
    <lineage>
        <taxon>Eukaryota</taxon>
        <taxon>Viridiplantae</taxon>
        <taxon>Streptophyta</taxon>
        <taxon>Embryophyta</taxon>
        <taxon>Tracheophyta</taxon>
        <taxon>Spermatophyta</taxon>
        <taxon>Magnoliopsida</taxon>
        <taxon>eudicotyledons</taxon>
        <taxon>Gunneridae</taxon>
        <taxon>Pentapetalae</taxon>
        <taxon>rosids</taxon>
        <taxon>malvids</taxon>
        <taxon>Myrtales</taxon>
        <taxon>Onagraceae</taxon>
        <taxon>Onagroideae</taxon>
        <taxon>Onagreae</taxon>
        <taxon>Oenothera</taxon>
    </lineage>
</organism>
<comment type="subunit">
    <text evidence="1">Part of the 30S ribosomal subunit.</text>
</comment>
<comment type="subcellular location">
    <subcellularLocation>
        <location>Plastid</location>
        <location>Chloroplast</location>
    </subcellularLocation>
</comment>
<comment type="similarity">
    <text evidence="1">Belongs to the bacterial ribosomal protein bS18 family.</text>
</comment>
<accession>B0Z4Y2</accession>
<reference key="1">
    <citation type="journal article" date="2008" name="Nucleic Acids Res.">
        <title>The complete nucleotide sequences of the five genetically distinct plastid genomes of Oenothera, subsection Oenothera: I. Sequence evaluation and plastome evolution.</title>
        <authorList>
            <person name="Greiner S."/>
            <person name="Wang X."/>
            <person name="Rauwolf U."/>
            <person name="Silber M.V."/>
            <person name="Mayer K."/>
            <person name="Meurer J."/>
            <person name="Haberer G."/>
            <person name="Herrmann R.G."/>
        </authorList>
    </citation>
    <scope>NUCLEOTIDE SEQUENCE [LARGE SCALE GENOMIC DNA]</scope>
    <source>
        <strain>cv. Suaveolens Grado</strain>
    </source>
</reference>
<evidence type="ECO:0000255" key="1">
    <source>
        <dbReference type="HAMAP-Rule" id="MF_00270"/>
    </source>
</evidence>
<evidence type="ECO:0000305" key="2"/>
<geneLocation type="chloroplast"/>
<proteinExistence type="inferred from homology"/>
<gene>
    <name evidence="1" type="primary">rps18</name>
</gene>